<organism>
    <name type="scientific">Trypanosoma cruzi</name>
    <dbReference type="NCBI Taxonomy" id="5693"/>
    <lineage>
        <taxon>Eukaryota</taxon>
        <taxon>Discoba</taxon>
        <taxon>Euglenozoa</taxon>
        <taxon>Kinetoplastea</taxon>
        <taxon>Metakinetoplastina</taxon>
        <taxon>Trypanosomatida</taxon>
        <taxon>Trypanosomatidae</taxon>
        <taxon>Trypanosoma</taxon>
        <taxon>Schizotrypanum</taxon>
    </lineage>
</organism>
<evidence type="ECO:0000250" key="1"/>
<evidence type="ECO:0000250" key="2">
    <source>
        <dbReference type="UniProtKB" id="P68363"/>
    </source>
</evidence>
<evidence type="ECO:0000305" key="3"/>
<proteinExistence type="inferred from homology"/>
<reference key="1">
    <citation type="submission" date="1996-03" db="EMBL/GenBank/DDBJ databases">
        <authorList>
            <person name="Amorim M.I."/>
            <person name="Traub-Cseko Y.M."/>
        </authorList>
    </citation>
    <scope>NUCLEOTIDE SEQUENCE [GENOMIC DNA]</scope>
    <source>
        <strain>DM28</strain>
    </source>
</reference>
<dbReference type="EC" id="3.6.5.-" evidence="2"/>
<dbReference type="EMBL" id="M97956">
    <property type="protein sequence ID" value="AAA91957.1"/>
    <property type="molecule type" value="Genomic_DNA"/>
</dbReference>
<dbReference type="EMBL" id="M96849">
    <property type="protein sequence ID" value="AAA91959.1"/>
    <property type="molecule type" value="Genomic_DNA"/>
</dbReference>
<dbReference type="SMR" id="Q27352"/>
<dbReference type="BindingDB" id="Q27352"/>
<dbReference type="ChEMBL" id="CHEMBL3988589"/>
<dbReference type="ABCD" id="Q27352">
    <property type="antibodies" value="1 sequenced antibody"/>
</dbReference>
<dbReference type="VEuPathDB" id="TriTrypDB:BCY84_04487"/>
<dbReference type="VEuPathDB" id="TriTrypDB:C3747_235g30"/>
<dbReference type="VEuPathDB" id="TriTrypDB:C4B63_333g13"/>
<dbReference type="VEuPathDB" id="TriTrypDB:ECC02_012704"/>
<dbReference type="VEuPathDB" id="TriTrypDB:Tc_MARK_8090"/>
<dbReference type="VEuPathDB" id="TriTrypDB:TcBrA4_0064530"/>
<dbReference type="VEuPathDB" id="TriTrypDB:TcCL_Unassigned04572"/>
<dbReference type="VEuPathDB" id="TriTrypDB:TcCLB.411235.9"/>
<dbReference type="VEuPathDB" id="TriTrypDB:TcCLB.506563.40"/>
<dbReference type="VEuPathDB" id="TriTrypDB:TcCLB.509695.120"/>
<dbReference type="VEuPathDB" id="TriTrypDB:TCDM_06629"/>
<dbReference type="VEuPathDB" id="TriTrypDB:TcG_07744"/>
<dbReference type="VEuPathDB" id="TriTrypDB:TCSYLVIO_008641"/>
<dbReference type="VEuPathDB" id="TriTrypDB:TcYC6_0022480"/>
<dbReference type="GO" id="GO:0005737">
    <property type="term" value="C:cytoplasm"/>
    <property type="evidence" value="ECO:0007669"/>
    <property type="project" value="UniProtKB-KW"/>
</dbReference>
<dbReference type="GO" id="GO:0005874">
    <property type="term" value="C:microtubule"/>
    <property type="evidence" value="ECO:0007669"/>
    <property type="project" value="UniProtKB-KW"/>
</dbReference>
<dbReference type="GO" id="GO:0005525">
    <property type="term" value="F:GTP binding"/>
    <property type="evidence" value="ECO:0007669"/>
    <property type="project" value="UniProtKB-KW"/>
</dbReference>
<dbReference type="GO" id="GO:0016787">
    <property type="term" value="F:hydrolase activity"/>
    <property type="evidence" value="ECO:0007669"/>
    <property type="project" value="UniProtKB-KW"/>
</dbReference>
<dbReference type="GO" id="GO:0046872">
    <property type="term" value="F:metal ion binding"/>
    <property type="evidence" value="ECO:0007669"/>
    <property type="project" value="UniProtKB-KW"/>
</dbReference>
<dbReference type="GO" id="GO:0005200">
    <property type="term" value="F:structural constituent of cytoskeleton"/>
    <property type="evidence" value="ECO:0007669"/>
    <property type="project" value="InterPro"/>
</dbReference>
<dbReference type="GO" id="GO:0007017">
    <property type="term" value="P:microtubule-based process"/>
    <property type="evidence" value="ECO:0007669"/>
    <property type="project" value="InterPro"/>
</dbReference>
<dbReference type="CDD" id="cd02186">
    <property type="entry name" value="alpha_tubulin"/>
    <property type="match status" value="1"/>
</dbReference>
<dbReference type="FunFam" id="1.10.287.600:FF:000005">
    <property type="entry name" value="Tubulin alpha chain"/>
    <property type="match status" value="1"/>
</dbReference>
<dbReference type="FunFam" id="3.30.1330.20:FF:000001">
    <property type="entry name" value="Tubulin alpha chain"/>
    <property type="match status" value="1"/>
</dbReference>
<dbReference type="FunFam" id="3.40.50.1440:FF:000004">
    <property type="entry name" value="Tubulin alpha chain"/>
    <property type="match status" value="1"/>
</dbReference>
<dbReference type="Gene3D" id="1.10.287.600">
    <property type="entry name" value="Helix hairpin bin"/>
    <property type="match status" value="1"/>
</dbReference>
<dbReference type="Gene3D" id="3.30.1330.20">
    <property type="entry name" value="Tubulin/FtsZ, C-terminal domain"/>
    <property type="match status" value="1"/>
</dbReference>
<dbReference type="Gene3D" id="3.40.50.1440">
    <property type="entry name" value="Tubulin/FtsZ, GTPase domain"/>
    <property type="match status" value="1"/>
</dbReference>
<dbReference type="InterPro" id="IPR002452">
    <property type="entry name" value="Alpha_tubulin"/>
</dbReference>
<dbReference type="InterPro" id="IPR008280">
    <property type="entry name" value="Tub_FtsZ_C"/>
</dbReference>
<dbReference type="InterPro" id="IPR000217">
    <property type="entry name" value="Tubulin"/>
</dbReference>
<dbReference type="InterPro" id="IPR037103">
    <property type="entry name" value="Tubulin/FtsZ-like_C"/>
</dbReference>
<dbReference type="InterPro" id="IPR018316">
    <property type="entry name" value="Tubulin/FtsZ_2-layer-sand-dom"/>
</dbReference>
<dbReference type="InterPro" id="IPR036525">
    <property type="entry name" value="Tubulin/FtsZ_GTPase_sf"/>
</dbReference>
<dbReference type="InterPro" id="IPR023123">
    <property type="entry name" value="Tubulin_C"/>
</dbReference>
<dbReference type="InterPro" id="IPR017975">
    <property type="entry name" value="Tubulin_CS"/>
</dbReference>
<dbReference type="InterPro" id="IPR003008">
    <property type="entry name" value="Tubulin_FtsZ_GTPase"/>
</dbReference>
<dbReference type="PANTHER" id="PTHR11588">
    <property type="entry name" value="TUBULIN"/>
    <property type="match status" value="1"/>
</dbReference>
<dbReference type="Pfam" id="PF00091">
    <property type="entry name" value="Tubulin"/>
    <property type="match status" value="1"/>
</dbReference>
<dbReference type="Pfam" id="PF03953">
    <property type="entry name" value="Tubulin_C"/>
    <property type="match status" value="1"/>
</dbReference>
<dbReference type="PRINTS" id="PR01162">
    <property type="entry name" value="ALPHATUBULIN"/>
</dbReference>
<dbReference type="PRINTS" id="PR01161">
    <property type="entry name" value="TUBULIN"/>
</dbReference>
<dbReference type="SMART" id="SM00864">
    <property type="entry name" value="Tubulin"/>
    <property type="match status" value="1"/>
</dbReference>
<dbReference type="SMART" id="SM00865">
    <property type="entry name" value="Tubulin_C"/>
    <property type="match status" value="1"/>
</dbReference>
<dbReference type="SUPFAM" id="SSF55307">
    <property type="entry name" value="Tubulin C-terminal domain-like"/>
    <property type="match status" value="1"/>
</dbReference>
<dbReference type="SUPFAM" id="SSF52490">
    <property type="entry name" value="Tubulin nucleotide-binding domain-like"/>
    <property type="match status" value="1"/>
</dbReference>
<dbReference type="PROSITE" id="PS00227">
    <property type="entry name" value="TUBULIN"/>
    <property type="match status" value="1"/>
</dbReference>
<comment type="function">
    <text>Tubulin is the major constituent of microtubules, a cylinder consisting of laterally associated linear protofilaments composed of alpha- and beta-tubulin heterodimers. Microtubules grow by the addition of GTP-tubulin dimers to the microtubule end, where a stabilizing cap forms. Below the cap, tubulin dimers are in GDP-bound state, owing to GTPase activity of alpha-tubulin.</text>
</comment>
<comment type="catalytic activity">
    <reaction evidence="2">
        <text>GTP + H2O = GDP + phosphate + H(+)</text>
        <dbReference type="Rhea" id="RHEA:19669"/>
        <dbReference type="ChEBI" id="CHEBI:15377"/>
        <dbReference type="ChEBI" id="CHEBI:15378"/>
        <dbReference type="ChEBI" id="CHEBI:37565"/>
        <dbReference type="ChEBI" id="CHEBI:43474"/>
        <dbReference type="ChEBI" id="CHEBI:58189"/>
    </reaction>
    <physiologicalReaction direction="left-to-right" evidence="2">
        <dbReference type="Rhea" id="RHEA:19670"/>
    </physiologicalReaction>
</comment>
<comment type="cofactor">
    <cofactor evidence="2">
        <name>Mg(2+)</name>
        <dbReference type="ChEBI" id="CHEBI:18420"/>
    </cofactor>
</comment>
<comment type="subunit">
    <text>Dimer of alpha and beta chains. A typical microtubule is a hollow water-filled tube with an outer diameter of 25 nm and an inner diameter of 15 nM. Alpha-beta heterodimers associate head-to-tail to form protofilaments running lengthwise along the microtubule wall with the beta-tubulin subunit facing the microtubule plus end conferring a structural polarity. Microtubules usually have 13 protofilaments but different protofilament numbers can be found in some organisms and specialized cells.</text>
</comment>
<comment type="subcellular location">
    <subcellularLocation>
        <location>Cytoplasm</location>
        <location>Cytoskeleton</location>
    </subcellularLocation>
</comment>
<comment type="PTM">
    <text evidence="1">Undergoes a tyrosination/detyrosination cycle, the cyclic removal and re-addition of a C-terminal tyrosine residue by the enzymes tubulin tyrosine carboxypeptidase (TTCP) and tubulin tyrosine ligase (TTL), respectively.</text>
</comment>
<comment type="PTM">
    <text evidence="1">Acetylation of alpha chains at Lys-40 stabilizes microtubules and affects affinity and processivity of microtubule motors. This modification has a role in multiple cellular functions, ranging from cell motility, cell cycle progression or cell differentiation to intracellular trafficking and signaling (By similarity).</text>
</comment>
<comment type="similarity">
    <text evidence="3">Belongs to the tubulin family.</text>
</comment>
<keyword id="KW-0007">Acetylation</keyword>
<keyword id="KW-0963">Cytoplasm</keyword>
<keyword id="KW-0206">Cytoskeleton</keyword>
<keyword id="KW-0342">GTP-binding</keyword>
<keyword id="KW-0378">Hydrolase</keyword>
<keyword id="KW-0460">Magnesium</keyword>
<keyword id="KW-0479">Metal-binding</keyword>
<keyword id="KW-0493">Microtubule</keyword>
<keyword id="KW-0547">Nucleotide-binding</keyword>
<name>TBA_TRYCR</name>
<protein>
    <recommendedName>
        <fullName>Tubulin alpha chain</fullName>
        <ecNumber evidence="2">3.6.5.-</ecNumber>
    </recommendedName>
</protein>
<sequence>MREAICIHIGQAGCQVGNACWELFCLEHGIQPDGAMPSDKTIGVEDDAFNTFFSETGAGKHVPRAVFLDLEPTVVDEIRTGTYRQLFHPEQLISGKEDAANNYARGHYTIGKEIVDLCLDRIRKLADNCTGLQGFLVYHAVGGGTGSGLGALLLERLSVDYGKKSKLGYTVYPSPQVSTAVVEPYNSVLSTHSLLEHTDVAAMLDNEAIYDLTRANLDIERPTYTNLNRLIGQVVSALTASLRFDGALNVDLTEFQTNLVPYPRIHFVLTTYAPVISAEKAYHEQLSVSEISNAVFEPASMMTKCDPRHGKYMACCLMYRGDVVPKDVNAAVATIKTKRTIQFVDWSPTGFKCGINYQPPTVVPGGDLAKVQRAVCMIANSTAIAEVFARIDHKFDLMYSKRAFVHWYVGEGMEEGEFSEAREDLAALEKDYEEVGAESADMEGEEDVEEY</sequence>
<accession>Q27352</accession>
<feature type="chain" id="PRO_0000048235" description="Tubulin alpha chain">
    <location>
        <begin position="1"/>
        <end position="451"/>
    </location>
</feature>
<feature type="active site" evidence="2">
    <location>
        <position position="254"/>
    </location>
</feature>
<feature type="binding site" evidence="2">
    <location>
        <position position="11"/>
    </location>
    <ligand>
        <name>GTP</name>
        <dbReference type="ChEBI" id="CHEBI:37565"/>
    </ligand>
</feature>
<feature type="binding site" evidence="2">
    <location>
        <position position="71"/>
    </location>
    <ligand>
        <name>GTP</name>
        <dbReference type="ChEBI" id="CHEBI:37565"/>
    </ligand>
</feature>
<feature type="binding site" evidence="2">
    <location>
        <position position="71"/>
    </location>
    <ligand>
        <name>Mg(2+)</name>
        <dbReference type="ChEBI" id="CHEBI:18420"/>
    </ligand>
</feature>
<feature type="binding site" evidence="2">
    <location>
        <position position="144"/>
    </location>
    <ligand>
        <name>GTP</name>
        <dbReference type="ChEBI" id="CHEBI:37565"/>
    </ligand>
</feature>
<feature type="binding site" evidence="2">
    <location>
        <position position="145"/>
    </location>
    <ligand>
        <name>GTP</name>
        <dbReference type="ChEBI" id="CHEBI:37565"/>
    </ligand>
</feature>
<feature type="binding site" evidence="2">
    <location>
        <position position="179"/>
    </location>
    <ligand>
        <name>GTP</name>
        <dbReference type="ChEBI" id="CHEBI:37565"/>
    </ligand>
</feature>
<feature type="binding site" evidence="2">
    <location>
        <position position="206"/>
    </location>
    <ligand>
        <name>GTP</name>
        <dbReference type="ChEBI" id="CHEBI:37565"/>
    </ligand>
</feature>
<feature type="binding site" evidence="2">
    <location>
        <position position="228"/>
    </location>
    <ligand>
        <name>GTP</name>
        <dbReference type="ChEBI" id="CHEBI:37565"/>
    </ligand>
</feature>
<feature type="site" description="Involved in polymerization">
    <location>
        <position position="451"/>
    </location>
</feature>
<feature type="modified residue" description="N6-acetyllysine" evidence="1">
    <location>
        <position position="40"/>
    </location>
</feature>